<reference key="1">
    <citation type="journal article" date="1995" name="Biochim. Biophys. Acta">
        <title>Isolation and sequence analysis of the gene for arginine kinase from the chelicerate arthropod, Limulus polyphemus: insights into catalytically important residues.</title>
        <authorList>
            <person name="Strong S.J."/>
            <person name="Ellington W.R."/>
        </authorList>
    </citation>
    <scope>NUCLEOTIDE SEQUENCE [MRNA]</scope>
    <scope>PARTIAL PROTEIN SEQUENCE</scope>
    <source>
        <tissue>Heart</tissue>
        <tissue>Skeletal muscle</tissue>
    </source>
</reference>
<reference key="2">
    <citation type="journal article" date="1998" name="Proc. Natl. Acad. Sci. U.S.A.">
        <title>Transition state structure of arginine kinase: implications for catalysis of bimolecular reactions.</title>
        <authorList>
            <person name="Zhou G."/>
            <person name="Somasundaram T."/>
            <person name="Blanc E."/>
            <person name="Parthasarathy G."/>
            <person name="Ellington W.R."/>
            <person name="Chapman M.S."/>
        </authorList>
    </citation>
    <scope>X-RAY CRYSTALLOGRAPHY (1.86 ANGSTROMS) IN COMPLEX WITH ARGININE; NITRATE AND ADP</scope>
</reference>
<reference key="3">
    <citation type="journal article" date="2002" name="Acta Crystallogr. D">
        <title>Refinement of the arginine kinase transition-state analogue complex at 1.2 A resolution: mechanistic insights.</title>
        <authorList>
            <person name="Yousef M.S."/>
            <person name="Fabiola F."/>
            <person name="Gattis J.L."/>
            <person name="Somasundaram T."/>
            <person name="Chapman M.S."/>
        </authorList>
    </citation>
    <scope>X-RAY CRYSTALLOGRAPHY (1.2 ANGSTROMS) IN COMPLEX WITH ARGININE; NITRATE AND ADP</scope>
</reference>
<reference key="4">
    <citation type="journal article" date="2003" name="J. Biol. Chem.">
        <title>The putative catalytic bases have, at most, an accessory role in the mechanism of arginine kinase.</title>
        <authorList>
            <person name="Pruett P.S."/>
            <person name="Azzi A."/>
            <person name="Clark S.A."/>
            <person name="Yousef M.S."/>
            <person name="Gattis J.L."/>
            <person name="Somasundaram T."/>
            <person name="Ellington W.R."/>
            <person name="Chapman M.S."/>
        </authorList>
    </citation>
    <scope>X-RAY CRYSTALLOGRAPHY (1.9 ANGSTROMS) OF MUTANTS GLN-225 AND ASP-314 IN COMPLEX WITH ARGININE; NITRATE AND ADP</scope>
    <scope>MUTAGENESIS OF GLU-225; ARG-312; GLU-314; HIS-315; GLU-317 AND GLU-319</scope>
</reference>
<reference key="5">
    <citation type="journal article" date="2004" name="Protein Sci.">
        <title>The role of phosphagen specificity loops in arginine kinase.</title>
        <authorList>
            <person name="Azzi A."/>
            <person name="Clark S.A."/>
            <person name="Ellington W.R."/>
            <person name="Chapman M.S."/>
        </authorList>
    </citation>
    <scope>X-RAY CRYSTALLOGRAPHY (1.45 ANGSTROMS) IN COMPLEX WITH ADP</scope>
</reference>
<reference key="6">
    <citation type="journal article" date="2004" name="Biochemistry">
        <title>The active site cysteine of arginine kinase: structural and functional analysis of partially active mutants.</title>
        <authorList>
            <person name="Gattis J.L."/>
            <person name="Ruben E."/>
            <person name="Fenley M.O."/>
            <person name="Ellington W.R."/>
            <person name="Chapman M.S."/>
        </authorList>
    </citation>
    <scope>X-RAY CRYSTALLOGRAPHY (2.3 ANGSTROMS) OF MUTANT ALA-271 IN COMPLEX WITH TRANSITION STATE ANALOG</scope>
    <scope>MUTAGENESIS OF CYS-271</scope>
    <scope>FUNCTION</scope>
    <scope>CATALYTIC ACTIVITY</scope>
</reference>
<keyword id="KW-0002">3D-structure</keyword>
<keyword id="KW-0067">ATP-binding</keyword>
<keyword id="KW-0963">Cytoplasm</keyword>
<keyword id="KW-0903">Direct protein sequencing</keyword>
<keyword id="KW-0418">Kinase</keyword>
<keyword id="KW-0547">Nucleotide-binding</keyword>
<keyword id="KW-0808">Transferase</keyword>
<evidence type="ECO:0000255" key="1">
    <source>
        <dbReference type="PROSITE-ProRule" id="PRU00842"/>
    </source>
</evidence>
<evidence type="ECO:0000255" key="2">
    <source>
        <dbReference type="PROSITE-ProRule" id="PRU00843"/>
    </source>
</evidence>
<evidence type="ECO:0000269" key="3">
    <source>
    </source>
</evidence>
<evidence type="ECO:0000269" key="4">
    <source>
    </source>
</evidence>
<evidence type="ECO:0000269" key="5">
    <source>
    </source>
</evidence>
<evidence type="ECO:0000269" key="6">
    <source>
    </source>
</evidence>
<evidence type="ECO:0000269" key="7">
    <source>
    </source>
</evidence>
<evidence type="ECO:0000305" key="8">
    <source>
    </source>
</evidence>
<evidence type="ECO:0007829" key="9">
    <source>
        <dbReference type="PDB" id="1M15"/>
    </source>
</evidence>
<evidence type="ECO:0007829" key="10">
    <source>
        <dbReference type="PDB" id="1P50"/>
    </source>
</evidence>
<protein>
    <recommendedName>
        <fullName>Arginine kinase</fullName>
        <shortName>AK</shortName>
        <ecNumber evidence="6">2.7.3.3</ecNumber>
    </recommendedName>
</protein>
<name>KARG_LIMPO</name>
<comment type="function">
    <text evidence="6">Catalyzes the reversible transfer of the terminal phosphoryl group of ATP to L-arginine.</text>
</comment>
<comment type="catalytic activity">
    <reaction evidence="6">
        <text>L-arginine + ATP = N(omega)-phospho-L-arginine + ADP + H(+)</text>
        <dbReference type="Rhea" id="RHEA:22940"/>
        <dbReference type="ChEBI" id="CHEBI:15378"/>
        <dbReference type="ChEBI" id="CHEBI:30616"/>
        <dbReference type="ChEBI" id="CHEBI:32682"/>
        <dbReference type="ChEBI" id="CHEBI:58477"/>
        <dbReference type="ChEBI" id="CHEBI:456216"/>
        <dbReference type="EC" id="2.7.3.3"/>
    </reaction>
    <physiologicalReaction direction="left-to-right" evidence="8">
        <dbReference type="Rhea" id="RHEA:22941"/>
    </physiologicalReaction>
</comment>
<comment type="subunit">
    <text evidence="3 4 5 6 7">Monomer.</text>
</comment>
<comment type="subcellular location">
    <subcellularLocation>
        <location>Cytoplasm</location>
    </subcellularLocation>
</comment>
<comment type="similarity">
    <text evidence="1 2">Belongs to the ATP:guanido phosphotransferase family.</text>
</comment>
<organism>
    <name type="scientific">Limulus polyphemus</name>
    <name type="common">Atlantic horseshoe crab</name>
    <dbReference type="NCBI Taxonomy" id="6850"/>
    <lineage>
        <taxon>Eukaryota</taxon>
        <taxon>Metazoa</taxon>
        <taxon>Ecdysozoa</taxon>
        <taxon>Arthropoda</taxon>
        <taxon>Chelicerata</taxon>
        <taxon>Merostomata</taxon>
        <taxon>Xiphosura</taxon>
        <taxon>Limulidae</taxon>
        <taxon>Limulus</taxon>
    </lineage>
</organism>
<accession>P51541</accession>
<feature type="chain" id="PRO_0000212000" description="Arginine kinase">
    <location>
        <begin position="1"/>
        <end position="357"/>
    </location>
</feature>
<feature type="domain" description="Phosphagen kinase N-terminal" evidence="1">
    <location>
        <begin position="9"/>
        <end position="91"/>
    </location>
</feature>
<feature type="domain" description="Phosphagen kinase C-terminal" evidence="2">
    <location>
        <begin position="119"/>
        <end position="356"/>
    </location>
</feature>
<feature type="binding site">
    <location>
        <begin position="64"/>
        <end position="68"/>
    </location>
    <ligand>
        <name>substrate</name>
    </ligand>
</feature>
<feature type="binding site">
    <location>
        <begin position="122"/>
        <end position="126"/>
    </location>
    <ligand>
        <name>ATP</name>
        <dbReference type="ChEBI" id="CHEBI:30616"/>
    </ligand>
</feature>
<feature type="binding site">
    <location>
        <position position="185"/>
    </location>
    <ligand>
        <name>ATP</name>
        <dbReference type="ChEBI" id="CHEBI:30616"/>
    </ligand>
</feature>
<feature type="binding site">
    <location>
        <position position="225"/>
    </location>
    <ligand>
        <name>substrate</name>
    </ligand>
</feature>
<feature type="binding site">
    <location>
        <position position="229"/>
    </location>
    <ligand>
        <name>ATP</name>
        <dbReference type="ChEBI" id="CHEBI:30616"/>
    </ligand>
</feature>
<feature type="binding site">
    <location>
        <position position="271"/>
    </location>
    <ligand>
        <name>substrate</name>
    </ligand>
</feature>
<feature type="binding site">
    <location>
        <begin position="280"/>
        <end position="284"/>
    </location>
    <ligand>
        <name>ATP</name>
        <dbReference type="ChEBI" id="CHEBI:30616"/>
    </ligand>
</feature>
<feature type="binding site">
    <location>
        <begin position="309"/>
        <end position="314"/>
    </location>
    <ligand>
        <name>ATP</name>
        <dbReference type="ChEBI" id="CHEBI:30616"/>
    </ligand>
</feature>
<feature type="binding site">
    <location>
        <position position="314"/>
    </location>
    <ligand>
        <name>substrate</name>
    </ligand>
</feature>
<feature type="mutagenesis site" description="Reduces catalytic activity by 99.9%." evidence="4">
    <original>E</original>
    <variation>A</variation>
    <location>
        <position position="225"/>
    </location>
</feature>
<feature type="mutagenesis site" description="Reduces catalytic activity by 99.7%." evidence="4">
    <original>E</original>
    <variation>D</variation>
    <variation>Q</variation>
    <location>
        <position position="225"/>
    </location>
</feature>
<feature type="mutagenesis site" description="Decreases affinity for phosphoarginine and ADP and reduces catalytic activity by 99%." evidence="6">
    <original>C</original>
    <variation>A</variation>
    <variation>D</variation>
    <variation>N</variation>
    <variation>S</variation>
    <location>
        <position position="271"/>
    </location>
</feature>
<feature type="mutagenesis site" description="Reduces catalytic activity by 20%; when associated with V-314; D-315; A-317 and V-319." evidence="4">
    <original>R</original>
    <variation>G</variation>
    <location>
        <position position="312"/>
    </location>
</feature>
<feature type="mutagenesis site" description="Reduces catalytic activity by 98.3%." evidence="4">
    <original>E</original>
    <variation>D</variation>
    <location>
        <position position="314"/>
    </location>
</feature>
<feature type="mutagenesis site" description="Reduces catalytic activity by 99.7%. Reduces catalytic activity by 99.8%; when associated with Q-225." evidence="4">
    <original>E</original>
    <variation>Q</variation>
    <location>
        <position position="314"/>
    </location>
</feature>
<feature type="mutagenesis site" description="Reduces catalytic activity by 20%; when associated with G-312; D-315; A-317 and V-319." evidence="4">
    <original>E</original>
    <variation>V</variation>
    <location>
        <position position="314"/>
    </location>
</feature>
<feature type="mutagenesis site" description="Reduces catalytic activity by 20%; when associated with G-312; V-314; A-317 and V-319." evidence="4">
    <original>H</original>
    <variation>D</variation>
    <location>
        <position position="315"/>
    </location>
</feature>
<feature type="mutagenesis site" description="Reduces catalytic activity by 20%; when associated with G-312; V-314; D-315 and V-319." evidence="4">
    <original>E</original>
    <variation>A</variation>
    <location>
        <position position="317"/>
    </location>
</feature>
<feature type="mutagenesis site" description="Reduces catalytic activity by 20%; when associated with G-312; V-314; D-315 and A-317." evidence="4">
    <original>E</original>
    <variation>V</variation>
    <location>
        <position position="319"/>
    </location>
</feature>
<feature type="helix" evidence="9">
    <location>
        <begin position="4"/>
        <end position="19"/>
    </location>
</feature>
<feature type="helix" evidence="9">
    <location>
        <begin position="26"/>
        <end position="30"/>
    </location>
</feature>
<feature type="helix" evidence="9">
    <location>
        <begin position="33"/>
        <end position="39"/>
    </location>
</feature>
<feature type="helix" evidence="9">
    <location>
        <begin position="50"/>
        <end position="59"/>
    </location>
</feature>
<feature type="turn" evidence="10">
    <location>
        <begin position="60"/>
        <end position="62"/>
    </location>
</feature>
<feature type="strand" evidence="9">
    <location>
        <begin position="70"/>
        <end position="72"/>
    </location>
</feature>
<feature type="helix" evidence="9">
    <location>
        <begin position="74"/>
        <end position="77"/>
    </location>
</feature>
<feature type="helix" evidence="9">
    <location>
        <begin position="79"/>
        <end position="89"/>
    </location>
</feature>
<feature type="helix" evidence="9">
    <location>
        <begin position="107"/>
        <end position="109"/>
    </location>
</feature>
<feature type="strand" evidence="9">
    <location>
        <begin position="118"/>
        <end position="129"/>
    </location>
</feature>
<feature type="helix" evidence="9">
    <location>
        <begin position="137"/>
        <end position="139"/>
    </location>
</feature>
<feature type="helix" evidence="9">
    <location>
        <begin position="142"/>
        <end position="156"/>
    </location>
</feature>
<feature type="helix" evidence="9">
    <location>
        <begin position="161"/>
        <end position="163"/>
    </location>
</feature>
<feature type="strand" evidence="9">
    <location>
        <begin position="166"/>
        <end position="170"/>
    </location>
</feature>
<feature type="helix" evidence="9">
    <location>
        <begin position="175"/>
        <end position="183"/>
    </location>
</feature>
<feature type="helix" evidence="9">
    <location>
        <begin position="193"/>
        <end position="197"/>
    </location>
</feature>
<feature type="turn" evidence="9">
    <location>
        <begin position="202"/>
        <end position="207"/>
    </location>
</feature>
<feature type="strand" evidence="9">
    <location>
        <begin position="209"/>
        <end position="212"/>
    </location>
</feature>
<feature type="strand" evidence="9">
    <location>
        <begin position="216"/>
        <end position="238"/>
    </location>
</feature>
<feature type="helix" evidence="9">
    <location>
        <begin position="239"/>
        <end position="254"/>
    </location>
</feature>
<feature type="turn" evidence="9">
    <location>
        <begin position="263"/>
        <end position="265"/>
    </location>
</feature>
<feature type="helix" evidence="9">
    <location>
        <begin position="272"/>
        <end position="274"/>
    </location>
</feature>
<feature type="strand" evidence="9">
    <location>
        <begin position="280"/>
        <end position="285"/>
    </location>
</feature>
<feature type="helix" evidence="9">
    <location>
        <begin position="288"/>
        <end position="292"/>
    </location>
</feature>
<feature type="helix" evidence="9">
    <location>
        <begin position="294"/>
        <end position="303"/>
    </location>
</feature>
<feature type="strand" evidence="9">
    <location>
        <begin position="306"/>
        <end position="310"/>
    </location>
</feature>
<feature type="strand" evidence="9">
    <location>
        <begin position="322"/>
        <end position="327"/>
    </location>
</feature>
<feature type="strand" evidence="9">
    <location>
        <begin position="331"/>
        <end position="333"/>
    </location>
</feature>
<feature type="helix" evidence="9">
    <location>
        <begin position="335"/>
        <end position="355"/>
    </location>
</feature>
<dbReference type="EC" id="2.7.3.3" evidence="6"/>
<dbReference type="EMBL" id="U09809">
    <property type="protein sequence ID" value="AAA82169.1"/>
    <property type="molecule type" value="mRNA"/>
</dbReference>
<dbReference type="PIR" id="S52098">
    <property type="entry name" value="S52098"/>
</dbReference>
<dbReference type="RefSeq" id="NP_001301013.1">
    <property type="nucleotide sequence ID" value="NM_001314084.1"/>
</dbReference>
<dbReference type="PDB" id="1BG0">
    <property type="method" value="X-ray"/>
    <property type="resolution" value="1.86 A"/>
    <property type="chains" value="A=2-357"/>
</dbReference>
<dbReference type="PDB" id="1M15">
    <property type="method" value="X-ray"/>
    <property type="resolution" value="1.20 A"/>
    <property type="chains" value="A=1-357"/>
</dbReference>
<dbReference type="PDB" id="1P50">
    <property type="method" value="X-ray"/>
    <property type="resolution" value="2.80 A"/>
    <property type="chains" value="A=2-357"/>
</dbReference>
<dbReference type="PDB" id="1P52">
    <property type="method" value="X-ray"/>
    <property type="resolution" value="1.90 A"/>
    <property type="chains" value="A=1-357"/>
</dbReference>
<dbReference type="PDB" id="1RL9">
    <property type="method" value="X-ray"/>
    <property type="resolution" value="1.45 A"/>
    <property type="chains" value="A=1-357"/>
</dbReference>
<dbReference type="PDB" id="1SD0">
    <property type="method" value="X-ray"/>
    <property type="resolution" value="2.30 A"/>
    <property type="chains" value="A=1-357"/>
</dbReference>
<dbReference type="PDB" id="3M10">
    <property type="method" value="X-ray"/>
    <property type="resolution" value="2.35 A"/>
    <property type="chains" value="A/B=1-357"/>
</dbReference>
<dbReference type="PDB" id="4GVY">
    <property type="method" value="X-ray"/>
    <property type="resolution" value="2.09 A"/>
    <property type="chains" value="A=1-357"/>
</dbReference>
<dbReference type="PDB" id="4GVZ">
    <property type="method" value="X-ray"/>
    <property type="resolution" value="2.96 A"/>
    <property type="chains" value="A=1-357"/>
</dbReference>
<dbReference type="PDB" id="4GW0">
    <property type="method" value="X-ray"/>
    <property type="resolution" value="2.45 A"/>
    <property type="chains" value="A=1-357"/>
</dbReference>
<dbReference type="PDB" id="4GW2">
    <property type="method" value="X-ray"/>
    <property type="resolution" value="2.16 A"/>
    <property type="chains" value="A=1-357"/>
</dbReference>
<dbReference type="PDB" id="5J99">
    <property type="method" value="X-ray"/>
    <property type="resolution" value="1.70 A"/>
    <property type="chains" value="A=1-357"/>
</dbReference>
<dbReference type="PDB" id="5J9A">
    <property type="method" value="X-ray"/>
    <property type="resolution" value="2.00 A"/>
    <property type="chains" value="A=1-357"/>
</dbReference>
<dbReference type="PDBsum" id="1BG0"/>
<dbReference type="PDBsum" id="1M15"/>
<dbReference type="PDBsum" id="1P50"/>
<dbReference type="PDBsum" id="1P52"/>
<dbReference type="PDBsum" id="1RL9"/>
<dbReference type="PDBsum" id="1SD0"/>
<dbReference type="PDBsum" id="3M10"/>
<dbReference type="PDBsum" id="4GVY"/>
<dbReference type="PDBsum" id="4GVZ"/>
<dbReference type="PDBsum" id="4GW0"/>
<dbReference type="PDBsum" id="4GW2"/>
<dbReference type="PDBsum" id="5J99"/>
<dbReference type="PDBsum" id="5J9A"/>
<dbReference type="BMRB" id="P51541"/>
<dbReference type="SMR" id="P51541"/>
<dbReference type="EnsemblMetazoa" id="NM_001314084.1">
    <property type="protein sequence ID" value="NP_001301013.1"/>
    <property type="gene ID" value="LOC106471713"/>
</dbReference>
<dbReference type="GeneID" id="106471713"/>
<dbReference type="KEGG" id="lpol:106471713"/>
<dbReference type="OrthoDB" id="430219at2759"/>
<dbReference type="BRENDA" id="2.7.3.3">
    <property type="organism ID" value="3034"/>
</dbReference>
<dbReference type="SABIO-RK" id="P51541"/>
<dbReference type="EvolutionaryTrace" id="P51541"/>
<dbReference type="Proteomes" id="UP000694941">
    <property type="component" value="Unplaced"/>
</dbReference>
<dbReference type="GO" id="GO:0005737">
    <property type="term" value="C:cytoplasm"/>
    <property type="evidence" value="ECO:0007669"/>
    <property type="project" value="UniProtKB-SubCell"/>
</dbReference>
<dbReference type="GO" id="GO:0005615">
    <property type="term" value="C:extracellular space"/>
    <property type="evidence" value="ECO:0007669"/>
    <property type="project" value="TreeGrafter"/>
</dbReference>
<dbReference type="GO" id="GO:0004054">
    <property type="term" value="F:arginine kinase activity"/>
    <property type="evidence" value="ECO:0000314"/>
    <property type="project" value="UniProtKB"/>
</dbReference>
<dbReference type="GO" id="GO:0005524">
    <property type="term" value="F:ATP binding"/>
    <property type="evidence" value="ECO:0000314"/>
    <property type="project" value="UniProtKB"/>
</dbReference>
<dbReference type="GO" id="GO:0004111">
    <property type="term" value="F:creatine kinase activity"/>
    <property type="evidence" value="ECO:0007669"/>
    <property type="project" value="InterPro"/>
</dbReference>
<dbReference type="GO" id="GO:0046314">
    <property type="term" value="P:phosphocreatine biosynthetic process"/>
    <property type="evidence" value="ECO:0007669"/>
    <property type="project" value="InterPro"/>
</dbReference>
<dbReference type="GO" id="GO:0016310">
    <property type="term" value="P:phosphorylation"/>
    <property type="evidence" value="ECO:0000314"/>
    <property type="project" value="UniProtKB"/>
</dbReference>
<dbReference type="CDD" id="cd07932">
    <property type="entry name" value="arginine_kinase_like"/>
    <property type="match status" value="1"/>
</dbReference>
<dbReference type="FunFam" id="3.30.590.10:FF:000006">
    <property type="entry name" value="Arginine kinase 1"/>
    <property type="match status" value="1"/>
</dbReference>
<dbReference type="FunFam" id="1.10.135.10:FF:000003">
    <property type="entry name" value="Three-domain arginine kinase"/>
    <property type="match status" value="1"/>
</dbReference>
<dbReference type="Gene3D" id="1.10.135.10">
    <property type="entry name" value="ATP:guanido phosphotransferase, N-terminal domain"/>
    <property type="match status" value="1"/>
</dbReference>
<dbReference type="Gene3D" id="3.30.590.10">
    <property type="entry name" value="Glutamine synthetase/guanido kinase, catalytic domain"/>
    <property type="match status" value="1"/>
</dbReference>
<dbReference type="InterPro" id="IPR000749">
    <property type="entry name" value="ATP-guanido_PTrfase"/>
</dbReference>
<dbReference type="InterPro" id="IPR022415">
    <property type="entry name" value="ATP-guanido_PTrfase_AS"/>
</dbReference>
<dbReference type="InterPro" id="IPR022414">
    <property type="entry name" value="ATP-guanido_PTrfase_cat"/>
</dbReference>
<dbReference type="InterPro" id="IPR022413">
    <property type="entry name" value="ATP-guanido_PTrfase_N"/>
</dbReference>
<dbReference type="InterPro" id="IPR036802">
    <property type="entry name" value="ATP-guanido_PTrfase_N_sf"/>
</dbReference>
<dbReference type="InterPro" id="IPR014746">
    <property type="entry name" value="Gln_synth/guanido_kin_cat_dom"/>
</dbReference>
<dbReference type="PANTHER" id="PTHR11547:SF38">
    <property type="entry name" value="ARGININE KINASE 1-RELATED"/>
    <property type="match status" value="1"/>
</dbReference>
<dbReference type="PANTHER" id="PTHR11547">
    <property type="entry name" value="ARGININE OR CREATINE KINASE"/>
    <property type="match status" value="1"/>
</dbReference>
<dbReference type="Pfam" id="PF00217">
    <property type="entry name" value="ATP-gua_Ptrans"/>
    <property type="match status" value="1"/>
</dbReference>
<dbReference type="Pfam" id="PF02807">
    <property type="entry name" value="ATP-gua_PtransN"/>
    <property type="match status" value="1"/>
</dbReference>
<dbReference type="SUPFAM" id="SSF55931">
    <property type="entry name" value="Glutamine synthetase/guanido kinase"/>
    <property type="match status" value="1"/>
</dbReference>
<dbReference type="SUPFAM" id="SSF48034">
    <property type="entry name" value="Guanido kinase N-terminal domain"/>
    <property type="match status" value="1"/>
</dbReference>
<dbReference type="PROSITE" id="PS00112">
    <property type="entry name" value="PHOSPHAGEN_KINASE"/>
    <property type="match status" value="1"/>
</dbReference>
<dbReference type="PROSITE" id="PS51510">
    <property type="entry name" value="PHOSPHAGEN_KINASE_C"/>
    <property type="match status" value="1"/>
</dbReference>
<dbReference type="PROSITE" id="PS51509">
    <property type="entry name" value="PHOSPHAGEN_KINASE_N"/>
    <property type="match status" value="1"/>
</dbReference>
<sequence>MVDQATLDKLEAGFKKLQEASDCKSLLKKHLTKDVFDSIKNKKTGMGATLLDVIQSGVENLDSGVGIYAPDAESYRTFGPLFDPIIDDYHGGFKLTDKHPPKEWGDINTLVDLDPGGQFIISTRVRCGRSLQGYPFNPCLTAEQYKEMEEKVSSTLSSMEDELKGTYYPLTGMSKATQQQLIDDHFLFKEGDRFLQTANACRYWPTGRGIFHNDAKTFLVWVNEEDHLRIISMQKGGDLKTVYKRLVTAVDNIESKLPFSHDDRFGFLTFCPTNLGTTMRASVHIQLPKLAKDRKVLEDIASKFNLQVRGTRGEHTESEGGVYDISNKRRLGLTEYQAVREMQDGILEMIKMEKAAA</sequence>
<proteinExistence type="evidence at protein level"/>